<proteinExistence type="evidence at protein level"/>
<gene>
    <name evidence="1" type="primary">Oga</name>
    <name type="synonym">Hexc</name>
    <name type="synonym">Kiaa0679</name>
    <name type="synonym">Mgea5</name>
</gene>
<comment type="function">
    <text evidence="1 7">Cleaves GlcNAc but not GalNAc from O-glycosylated proteins (PubMed:16517082). Deglycosylates a large and diverse number of proteins, such as CRYAB, ELK1, GSDMD, LMNB1 and TAB1 (By similarity). Can use p-nitrophenyl-beta-GlcNAc and 4-methylumbelliferone-GlcNAc as substrates but not p-nitrophenyl-beta-GalNAc or p-nitrophenyl-alpha-GlcNAc (in vitro) (PubMed:16517082). Does not bind acetyl-CoA and does not have histone acetyltransferase activity (By similarity).</text>
</comment>
<comment type="catalytic activity">
    <reaction evidence="7">
        <text>3-O-(N-acetyl-beta-D-glucosaminyl)-L-seryl-[protein] + H2O = N-acetyl-D-glucosamine + L-seryl-[protein]</text>
        <dbReference type="Rhea" id="RHEA:48876"/>
        <dbReference type="Rhea" id="RHEA-COMP:9863"/>
        <dbReference type="Rhea" id="RHEA-COMP:12251"/>
        <dbReference type="ChEBI" id="CHEBI:15377"/>
        <dbReference type="ChEBI" id="CHEBI:29999"/>
        <dbReference type="ChEBI" id="CHEBI:90838"/>
        <dbReference type="ChEBI" id="CHEBI:506227"/>
        <dbReference type="EC" id="3.2.1.169"/>
    </reaction>
</comment>
<comment type="catalytic activity">
    <reaction evidence="7">
        <text>3-O-(N-acetyl-beta-D-glucosaminyl)-L-threonyl-[protein] + H2O = L-threonyl-[protein] + N-acetyl-D-glucosamine</text>
        <dbReference type="Rhea" id="RHEA:48892"/>
        <dbReference type="Rhea" id="RHEA-COMP:11060"/>
        <dbReference type="Rhea" id="RHEA-COMP:12252"/>
        <dbReference type="ChEBI" id="CHEBI:15377"/>
        <dbReference type="ChEBI" id="CHEBI:30013"/>
        <dbReference type="ChEBI" id="CHEBI:90840"/>
        <dbReference type="ChEBI" id="CHEBI:506227"/>
        <dbReference type="EC" id="3.2.1.169"/>
    </reaction>
</comment>
<comment type="biophysicochemical properties">
    <kinetics>
        <KM evidence="7">0.49 mM for pNP-GlcNAc</KM>
    </kinetics>
    <phDependence>
        <text evidence="7">Optimum pH is 6.5-7.</text>
    </phDependence>
</comment>
<comment type="subunit">
    <text evidence="1 8">Monomer (By similarity). Interacts with CLOCK (PubMed:23395175).</text>
</comment>
<comment type="interaction">
    <interactant intactId="EBI-8321615">
        <id>Q9EQQ9</id>
    </interactant>
    <interactant intactId="EBI-299632">
        <id>P62806</id>
        <label>H4c1</label>
    </interactant>
    <organismsDiffer>false</organismsDiffer>
    <experiments>2</experiments>
</comment>
<comment type="subcellular location">
    <subcellularLocation>
        <location evidence="9">Cytoplasm</location>
    </subcellularLocation>
    <subcellularLocation>
        <location evidence="3">Nucleus</location>
    </subcellularLocation>
</comment>
<comment type="alternative products">
    <event type="alternative splicing"/>
    <isoform>
        <id>Q9EQQ9-1</id>
        <name>1</name>
        <sequence type="displayed"/>
    </isoform>
    <isoform>
        <id>Q9EQQ9-2</id>
        <name>2</name>
        <sequence type="described" ref="VSP_020870 VSP_020872"/>
    </isoform>
    <isoform>
        <id>Q9EQQ9-3</id>
        <name>3</name>
        <sequence type="described" ref="VSP_020871"/>
    </isoform>
</comment>
<comment type="developmental stage">
    <text evidence="6">Expressed throughout development from blastocyst stage to embryonic day 16.5.</text>
</comment>
<comment type="induction">
    <text evidence="8">Expression in the liver oscillates in a circadian manner with peak levels at CT8-CT12.</text>
</comment>
<comment type="PTM">
    <text evidence="1">Proteolytically cleaved by caspase-3 during apoptosis. The fragments interact with each other; cleavage does not decrease enzyme activity.</text>
</comment>
<comment type="similarity">
    <text evidence="4 14">Belongs to the glycosyl hydrolase 84 family.</text>
</comment>
<comment type="caution">
    <text evidence="14">Was initially identified as a bi-functional protein that has an N-terminal domain with O-GlcNAcase activity and a C-terminal domain with histone acetyltransferase activity (PubMed:16356930). The histone acetyltransferase activity was detected only when the protein was expressed in mammalian cells, but not when expressed in bacterial cells, suggesting that the histone acetyltransferase activity might be due to the presence of a contaminant. Characterization of the human protein shows that this protein does not bind acetyl-CoA and therefore cannot have acetyltransferase activity.</text>
</comment>
<comment type="sequence caution" evidence="14">
    <conflict type="miscellaneous discrepancy">
        <sequence resource="EMBL-CDS" id="AAH41109"/>
    </conflict>
    <text>Contaminating sequence. Potential poly-A sequence.</text>
</comment>
<comment type="sequence caution" evidence="14">
    <conflict type="erroneous initiation">
        <sequence resource="EMBL-CDS" id="BAC97998"/>
    </conflict>
</comment>
<comment type="sequence caution" evidence="14">
    <conflict type="erroneous initiation">
        <sequence resource="EMBL-CDS" id="BAE26311"/>
    </conflict>
</comment>
<reference key="1">
    <citation type="submission" date="1999-03" db="EMBL/GenBank/DDBJ databases">
        <title>Mgea5, the murine homolog of a neutral-active cytosolic beta-N-acetylglucosaminidase, localized on chromosome 19.</title>
        <authorList>
            <person name="Csoka A.B."/>
        </authorList>
    </citation>
    <scope>NUCLEOTIDE SEQUENCE [MRNA] (ISOFORM 1)</scope>
</reference>
<reference key="2">
    <citation type="journal article" date="2003" name="DNA Res.">
        <title>Prediction of the coding sequences of mouse homologues of KIAA gene: III. The complete nucleotide sequences of 500 mouse KIAA-homologous cDNAs identified by screening of terminal sequences of cDNA clones randomly sampled from size-fractionated libraries.</title>
        <authorList>
            <person name="Okazaki N."/>
            <person name="Kikuno R."/>
            <person name="Ohara R."/>
            <person name="Inamoto S."/>
            <person name="Koseki H."/>
            <person name="Hiraoka S."/>
            <person name="Saga Y."/>
            <person name="Nagase T."/>
            <person name="Ohara O."/>
            <person name="Koga H."/>
        </authorList>
    </citation>
    <scope>NUCLEOTIDE SEQUENCE [LARGE SCALE MRNA] (ISOFORM 1)</scope>
    <source>
        <tissue>Embryonic tail</tissue>
    </source>
</reference>
<reference key="3">
    <citation type="journal article" date="2005" name="Science">
        <title>The transcriptional landscape of the mammalian genome.</title>
        <authorList>
            <person name="Carninci P."/>
            <person name="Kasukawa T."/>
            <person name="Katayama S."/>
            <person name="Gough J."/>
            <person name="Frith M.C."/>
            <person name="Maeda N."/>
            <person name="Oyama R."/>
            <person name="Ravasi T."/>
            <person name="Lenhard B."/>
            <person name="Wells C."/>
            <person name="Kodzius R."/>
            <person name="Shimokawa K."/>
            <person name="Bajic V.B."/>
            <person name="Brenner S.E."/>
            <person name="Batalov S."/>
            <person name="Forrest A.R."/>
            <person name="Zavolan M."/>
            <person name="Davis M.J."/>
            <person name="Wilming L.G."/>
            <person name="Aidinis V."/>
            <person name="Allen J.E."/>
            <person name="Ambesi-Impiombato A."/>
            <person name="Apweiler R."/>
            <person name="Aturaliya R.N."/>
            <person name="Bailey T.L."/>
            <person name="Bansal M."/>
            <person name="Baxter L."/>
            <person name="Beisel K.W."/>
            <person name="Bersano T."/>
            <person name="Bono H."/>
            <person name="Chalk A.M."/>
            <person name="Chiu K.P."/>
            <person name="Choudhary V."/>
            <person name="Christoffels A."/>
            <person name="Clutterbuck D.R."/>
            <person name="Crowe M.L."/>
            <person name="Dalla E."/>
            <person name="Dalrymple B.P."/>
            <person name="de Bono B."/>
            <person name="Della Gatta G."/>
            <person name="di Bernardo D."/>
            <person name="Down T."/>
            <person name="Engstrom P."/>
            <person name="Fagiolini M."/>
            <person name="Faulkner G."/>
            <person name="Fletcher C.F."/>
            <person name="Fukushima T."/>
            <person name="Furuno M."/>
            <person name="Futaki S."/>
            <person name="Gariboldi M."/>
            <person name="Georgii-Hemming P."/>
            <person name="Gingeras T.R."/>
            <person name="Gojobori T."/>
            <person name="Green R.E."/>
            <person name="Gustincich S."/>
            <person name="Harbers M."/>
            <person name="Hayashi Y."/>
            <person name="Hensch T.K."/>
            <person name="Hirokawa N."/>
            <person name="Hill D."/>
            <person name="Huminiecki L."/>
            <person name="Iacono M."/>
            <person name="Ikeo K."/>
            <person name="Iwama A."/>
            <person name="Ishikawa T."/>
            <person name="Jakt M."/>
            <person name="Kanapin A."/>
            <person name="Katoh M."/>
            <person name="Kawasawa Y."/>
            <person name="Kelso J."/>
            <person name="Kitamura H."/>
            <person name="Kitano H."/>
            <person name="Kollias G."/>
            <person name="Krishnan S.P."/>
            <person name="Kruger A."/>
            <person name="Kummerfeld S.K."/>
            <person name="Kurochkin I.V."/>
            <person name="Lareau L.F."/>
            <person name="Lazarevic D."/>
            <person name="Lipovich L."/>
            <person name="Liu J."/>
            <person name="Liuni S."/>
            <person name="McWilliam S."/>
            <person name="Madan Babu M."/>
            <person name="Madera M."/>
            <person name="Marchionni L."/>
            <person name="Matsuda H."/>
            <person name="Matsuzawa S."/>
            <person name="Miki H."/>
            <person name="Mignone F."/>
            <person name="Miyake S."/>
            <person name="Morris K."/>
            <person name="Mottagui-Tabar S."/>
            <person name="Mulder N."/>
            <person name="Nakano N."/>
            <person name="Nakauchi H."/>
            <person name="Ng P."/>
            <person name="Nilsson R."/>
            <person name="Nishiguchi S."/>
            <person name="Nishikawa S."/>
            <person name="Nori F."/>
            <person name="Ohara O."/>
            <person name="Okazaki Y."/>
            <person name="Orlando V."/>
            <person name="Pang K.C."/>
            <person name="Pavan W.J."/>
            <person name="Pavesi G."/>
            <person name="Pesole G."/>
            <person name="Petrovsky N."/>
            <person name="Piazza S."/>
            <person name="Reed J."/>
            <person name="Reid J.F."/>
            <person name="Ring B.Z."/>
            <person name="Ringwald M."/>
            <person name="Rost B."/>
            <person name="Ruan Y."/>
            <person name="Salzberg S.L."/>
            <person name="Sandelin A."/>
            <person name="Schneider C."/>
            <person name="Schoenbach C."/>
            <person name="Sekiguchi K."/>
            <person name="Semple C.A."/>
            <person name="Seno S."/>
            <person name="Sessa L."/>
            <person name="Sheng Y."/>
            <person name="Shibata Y."/>
            <person name="Shimada H."/>
            <person name="Shimada K."/>
            <person name="Silva D."/>
            <person name="Sinclair B."/>
            <person name="Sperling S."/>
            <person name="Stupka E."/>
            <person name="Sugiura K."/>
            <person name="Sultana R."/>
            <person name="Takenaka Y."/>
            <person name="Taki K."/>
            <person name="Tammoja K."/>
            <person name="Tan S.L."/>
            <person name="Tang S."/>
            <person name="Taylor M.S."/>
            <person name="Tegner J."/>
            <person name="Teichmann S.A."/>
            <person name="Ueda H.R."/>
            <person name="van Nimwegen E."/>
            <person name="Verardo R."/>
            <person name="Wei C.L."/>
            <person name="Yagi K."/>
            <person name="Yamanishi H."/>
            <person name="Zabarovsky E."/>
            <person name="Zhu S."/>
            <person name="Zimmer A."/>
            <person name="Hide W."/>
            <person name="Bult C."/>
            <person name="Grimmond S.M."/>
            <person name="Teasdale R.D."/>
            <person name="Liu E.T."/>
            <person name="Brusic V."/>
            <person name="Quackenbush J."/>
            <person name="Wahlestedt C."/>
            <person name="Mattick J.S."/>
            <person name="Hume D.A."/>
            <person name="Kai C."/>
            <person name="Sasaki D."/>
            <person name="Tomaru Y."/>
            <person name="Fukuda S."/>
            <person name="Kanamori-Katayama M."/>
            <person name="Suzuki M."/>
            <person name="Aoki J."/>
            <person name="Arakawa T."/>
            <person name="Iida J."/>
            <person name="Imamura K."/>
            <person name="Itoh M."/>
            <person name="Kato T."/>
            <person name="Kawaji H."/>
            <person name="Kawagashira N."/>
            <person name="Kawashima T."/>
            <person name="Kojima M."/>
            <person name="Kondo S."/>
            <person name="Konno H."/>
            <person name="Nakano K."/>
            <person name="Ninomiya N."/>
            <person name="Nishio T."/>
            <person name="Okada M."/>
            <person name="Plessy C."/>
            <person name="Shibata K."/>
            <person name="Shiraki T."/>
            <person name="Suzuki S."/>
            <person name="Tagami M."/>
            <person name="Waki K."/>
            <person name="Watahiki A."/>
            <person name="Okamura-Oho Y."/>
            <person name="Suzuki H."/>
            <person name="Kawai J."/>
            <person name="Hayashizaki Y."/>
        </authorList>
    </citation>
    <scope>NUCLEOTIDE SEQUENCE [LARGE SCALE MRNA] (ISOFORM 2)</scope>
    <scope>NUCLEOTIDE SEQUENCE [LARGE SCALE MRNA] OF 1-603 (ISOFORM 1)</scope>
    <scope>NUCLEOTIDE SEQUENCE [LARGE SCALE MRNA] OF 1-77 (ISOFORM 3)</scope>
    <source>
        <strain>C57BL/6J</strain>
        <strain>NOD</strain>
        <tissue>Head</tissue>
        <tissue>Mammary gland</tissue>
        <tissue>Thymus</tissue>
    </source>
</reference>
<reference key="4">
    <citation type="journal article" date="2004" name="Genome Res.">
        <title>The status, quality, and expansion of the NIH full-length cDNA project: the Mammalian Gene Collection (MGC).</title>
        <authorList>
            <consortium name="The MGC Project Team"/>
        </authorList>
    </citation>
    <scope>NUCLEOTIDE SEQUENCE [LARGE SCALE MRNA] (ISOFORM 1)</scope>
    <source>
        <strain>FVB/N-3</strain>
        <tissue>Kidney</tissue>
        <tissue>Mammary tumor</tissue>
    </source>
</reference>
<reference key="5">
    <citation type="submission" date="2009-01" db="UniProtKB">
        <authorList>
            <person name="Lubec G."/>
            <person name="Sunyer B."/>
            <person name="Chen W.-Q."/>
        </authorList>
    </citation>
    <scope>PROTEIN SEQUENCE OF 109-127</scope>
    <scope>IDENTIFICATION BY MASS SPECTROMETRY</scope>
    <source>
        <strain>OF1</strain>
        <tissue>Hippocampus</tissue>
    </source>
</reference>
<reference key="6">
    <citation type="journal article" date="2006" name="J. Biol. Chem.">
        <title>The histone acetyltransferase NCOAT contains a zinc finger-like motif involved in substrate recognition.</title>
        <authorList>
            <person name="Toleman C.A."/>
            <person name="Paterson A.J."/>
            <person name="Kudlow J.E."/>
        </authorList>
    </citation>
    <scope>PROTEIN SEQUENCE OF 157-167; 775-785 AND 875-886</scope>
</reference>
<reference key="7">
    <citation type="journal article" date="2001" name="Biochem. Biophys. Res. Commun.">
        <title>Identification of a nuclear variant of MGEA5, a cytoplasmic hyaluronidase and a beta-N-acetylglucosaminidase.</title>
        <authorList>
            <person name="Comtesse N."/>
            <person name="Maldener E."/>
            <person name="Meese E."/>
        </authorList>
    </citation>
    <scope>DEVELOPMENTAL STAGE</scope>
</reference>
<reference key="8">
    <citation type="journal article" date="2004" name="Mol. Cell. Proteomics">
        <title>Phosphoproteomic analysis of the developing mouse brain.</title>
        <authorList>
            <person name="Ballif B.A."/>
            <person name="Villen J."/>
            <person name="Beausoleil S.A."/>
            <person name="Schwartz D."/>
            <person name="Gygi S.P."/>
        </authorList>
    </citation>
    <scope>PHOSPHORYLATION [LARGE SCALE ANALYSIS] AT SER-364</scope>
    <scope>IDENTIFICATION BY MASS SPECTROMETRY [LARGE SCALE ANALYSIS]</scope>
    <source>
        <tissue>Embryonic brain</tissue>
    </source>
</reference>
<reference key="9">
    <citation type="journal article" date="2006" name="Biochim. Biophys. Acta">
        <title>Location and characterization of the O-GlcNAcase active site.</title>
        <authorList>
            <person name="Toleman C."/>
            <person name="Paterson A.J."/>
            <person name="Kudlow J.E."/>
        </authorList>
    </citation>
    <scope>IDENTIFICATION BY MASS SPECTROMETRY</scope>
    <scope>CATALYTIC ACTIVITY</scope>
    <scope>FUNCTION</scope>
    <scope>BIOPHYSICOCHEMICAL PROPERTIES</scope>
    <scope>MUTAGENESIS OF CYS-166; ASP-174; ASP-175; ASP-177 AND CYS-878</scope>
</reference>
<reference key="10">
    <citation type="journal article" date="2007" name="Proc. Natl. Acad. Sci. U.S.A.">
        <title>Large-scale phosphorylation analysis of mouse liver.</title>
        <authorList>
            <person name="Villen J."/>
            <person name="Beausoleil S.A."/>
            <person name="Gerber S.A."/>
            <person name="Gygi S.P."/>
        </authorList>
    </citation>
    <scope>IDENTIFICATION BY MASS SPECTROMETRY [LARGE SCALE ANALYSIS]</scope>
    <source>
        <tissue>Liver</tissue>
    </source>
</reference>
<reference key="11">
    <citation type="journal article" date="2010" name="Cell">
        <title>A tissue-specific atlas of mouse protein phosphorylation and expression.</title>
        <authorList>
            <person name="Huttlin E.L."/>
            <person name="Jedrychowski M.P."/>
            <person name="Elias J.E."/>
            <person name="Goswami T."/>
            <person name="Rad R."/>
            <person name="Beausoleil S.A."/>
            <person name="Villen J."/>
            <person name="Haas W."/>
            <person name="Sowa M.E."/>
            <person name="Gygi S.P."/>
        </authorList>
    </citation>
    <scope>PHOSPHORYLATION [LARGE SCALE ANALYSIS] AT SER-364</scope>
    <scope>IDENTIFICATION BY MASS SPECTROMETRY [LARGE SCALE ANALYSIS]</scope>
    <source>
        <tissue>Brain</tissue>
        <tissue>Heart</tissue>
        <tissue>Kidney</tissue>
        <tissue>Liver</tissue>
        <tissue>Lung</tissue>
        <tissue>Pancreas</tissue>
        <tissue>Spleen</tissue>
        <tissue>Testis</tissue>
    </source>
</reference>
<reference key="12">
    <citation type="journal article" date="2013" name="Cell Metab.">
        <title>Glucose sensor O-GlcNAcylation coordinates with phosphorylation to regulate circadian clock.</title>
        <authorList>
            <person name="Kaasik K."/>
            <person name="Kivimae S."/>
            <person name="Allen J.J."/>
            <person name="Chalkley R.J."/>
            <person name="Huang Y."/>
            <person name="Baer K."/>
            <person name="Kissel H."/>
            <person name="Burlingame A.L."/>
            <person name="Shokat K.M."/>
            <person name="Ptacek L.J."/>
            <person name="Fu Y.H."/>
        </authorList>
    </citation>
    <scope>INTERACTION WITH CLOCK</scope>
    <scope>INDUCTION</scope>
</reference>
<reference key="13">
    <citation type="journal article" date="2014" name="J. Biol. Chem.">
        <title>Cross-talk between two essential nutrient-sensitive enzymes: O-GlcNAc transferase (OGT) and AMP-activated protein kinase (AMPK).</title>
        <authorList>
            <person name="Bullen J.W."/>
            <person name="Balsbaugh J.L."/>
            <person name="Chanda D."/>
            <person name="Shabanowitz J."/>
            <person name="Hunt D.F."/>
            <person name="Neumann D."/>
            <person name="Hart G.W."/>
        </authorList>
    </citation>
    <scope>SUBCELLULAR LOCATION</scope>
</reference>
<feature type="chain" id="PRO_0000252119" description="Protein O-GlcNAcase">
    <location>
        <begin position="1"/>
        <end position="916"/>
    </location>
</feature>
<feature type="domain" description="GH84" evidence="4">
    <location>
        <begin position="60"/>
        <end position="336"/>
    </location>
</feature>
<feature type="region of interest" description="Disordered" evidence="5">
    <location>
        <begin position="1"/>
        <end position="46"/>
    </location>
</feature>
<feature type="region of interest" description="Disordered" evidence="5">
    <location>
        <begin position="443"/>
        <end position="465"/>
    </location>
</feature>
<feature type="compositionally biased region" description="Basic and acidic residues" evidence="5">
    <location>
        <begin position="452"/>
        <end position="461"/>
    </location>
</feature>
<feature type="active site" description="Proton donor" evidence="4">
    <location>
        <position position="175"/>
    </location>
</feature>
<feature type="binding site" evidence="2">
    <location>
        <position position="67"/>
    </location>
    <ligand>
        <name>a protein</name>
        <dbReference type="ChEBI" id="CHEBI:16541"/>
    </ligand>
</feature>
<feature type="binding site" evidence="2">
    <location>
        <position position="98"/>
    </location>
    <ligand>
        <name>a protein</name>
        <dbReference type="ChEBI" id="CHEBI:16541"/>
    </ligand>
</feature>
<feature type="binding site" evidence="15">
    <location>
        <position position="174"/>
    </location>
    <ligand>
        <name>a protein</name>
        <dbReference type="ChEBI" id="CHEBI:16541"/>
    </ligand>
</feature>
<feature type="binding site" evidence="2">
    <location>
        <position position="219"/>
    </location>
    <ligand>
        <name>a protein</name>
        <dbReference type="ChEBI" id="CHEBI:16541"/>
    </ligand>
</feature>
<feature type="binding site" evidence="2">
    <location>
        <begin position="278"/>
        <end position="280"/>
    </location>
    <ligand>
        <name>a protein</name>
        <dbReference type="ChEBI" id="CHEBI:16541"/>
    </ligand>
</feature>
<feature type="binding site" evidence="2">
    <location>
        <position position="285"/>
    </location>
    <ligand>
        <name>a protein</name>
        <dbReference type="ChEBI" id="CHEBI:16541"/>
    </ligand>
</feature>
<feature type="binding site" evidence="2">
    <location>
        <position position="313"/>
    </location>
    <ligand>
        <name>a protein</name>
        <dbReference type="ChEBI" id="CHEBI:16541"/>
    </ligand>
</feature>
<feature type="site" description="Cleavage; by caspase-3" evidence="1">
    <location>
        <begin position="413"/>
        <end position="414"/>
    </location>
</feature>
<feature type="modified residue" description="Phosphoserine" evidence="16 17">
    <location>
        <position position="364"/>
    </location>
</feature>
<feature type="splice variant" id="VSP_020870" description="In isoform 2." evidence="11">
    <location>
        <begin position="1"/>
        <end position="698"/>
    </location>
</feature>
<feature type="splice variant" id="VSP_020871" description="In isoform 3." evidence="11">
    <original>M</original>
    <variation>MVRPRVWRSSRRVASQNGLRAFGPTDRGRRGAVAGGRRM</variation>
    <location>
        <position position="1"/>
    </location>
</feature>
<feature type="splice variant" id="VSP_020872" description="In isoform 2." evidence="11">
    <original>NDLFFQPPPLTPTSKVYTIRPYFPKDE</original>
    <variation>MYTTHSCLYSFFLTFFLVCCLTRLYFQ</variation>
    <location>
        <begin position="699"/>
        <end position="725"/>
    </location>
</feature>
<feature type="mutagenesis site" description="No change in substrate affinity but 60% reduction in O-GlcNAcase activity." evidence="7">
    <original>C</original>
    <variation>S</variation>
    <location>
        <position position="166"/>
    </location>
</feature>
<feature type="mutagenesis site" description="2-fold increase in substrate affinity and 77% reduction in O-GlcNAcase activity. Regains appreciable level of catalytic efficiency in the acidic pH range. No recovery of activity in the presence of sodium azide." evidence="7">
    <original>D</original>
    <variation>N</variation>
    <location>
        <position position="174"/>
    </location>
</feature>
<feature type="mutagenesis site" description="3-fold increase in substrate affinity and 90% reduction in O-GlcNAcase activity. Regains appreciable level of catalytic efficiency in the acidic pH range. 70% recovery of activity in the presence of sodium azide." evidence="7">
    <original>D</original>
    <variation>A</variation>
    <location>
        <position position="175"/>
    </location>
</feature>
<feature type="mutagenesis site" description="2-fold decrease in substrate affinity and 96% reduction in O-GlcNAcase activity. Regains appreciable level of catalytic efficiency in the acidic pH range. 40% recovery of activity in the presence of sodium azide." evidence="7">
    <original>D</original>
    <variation>N</variation>
    <location>
        <position position="177"/>
    </location>
</feature>
<feature type="mutagenesis site" description="No effect on O-GlcNAcase activity." evidence="7">
    <original>C</original>
    <variation>S</variation>
    <location>
        <position position="878"/>
    </location>
</feature>
<feature type="sequence conflict" description="In Ref. 3; BAE26311." evidence="14" ref="3">
    <original>S</original>
    <variation>T</variation>
    <location>
        <position position="6"/>
    </location>
</feature>
<feature type="sequence conflict" description="In Ref. 3; BAE26311." evidence="14" ref="3">
    <original>GA</original>
    <variation>RT</variation>
    <location>
        <begin position="52"/>
        <end position="53"/>
    </location>
</feature>
<feature type="sequence conflict" description="In Ref. 2; BAC97998." evidence="14" ref="2">
    <original>F</original>
    <variation>S</variation>
    <location>
        <position position="742"/>
    </location>
</feature>
<dbReference type="EC" id="3.2.1.169" evidence="7"/>
<dbReference type="EMBL" id="AF132214">
    <property type="protein sequence ID" value="AAG43273.2"/>
    <property type="molecule type" value="mRNA"/>
</dbReference>
<dbReference type="EMBL" id="AK129188">
    <property type="protein sequence ID" value="BAC97998.1"/>
    <property type="status" value="ALT_INIT"/>
    <property type="molecule type" value="mRNA"/>
</dbReference>
<dbReference type="EMBL" id="BC041109">
    <property type="protein sequence ID" value="AAH41109.1"/>
    <property type="status" value="ALT_SEQ"/>
    <property type="molecule type" value="mRNA"/>
</dbReference>
<dbReference type="EMBL" id="BC054821">
    <property type="protein sequence ID" value="AAH54821.1"/>
    <property type="molecule type" value="mRNA"/>
</dbReference>
<dbReference type="EMBL" id="AK012695">
    <property type="protein sequence ID" value="BAB28416.1"/>
    <property type="molecule type" value="mRNA"/>
</dbReference>
<dbReference type="EMBL" id="AK014781">
    <property type="protein sequence ID" value="BAB29550.1"/>
    <property type="molecule type" value="mRNA"/>
</dbReference>
<dbReference type="EMBL" id="AK077613">
    <property type="protein sequence ID" value="BAC36900.1"/>
    <property type="molecule type" value="mRNA"/>
</dbReference>
<dbReference type="EMBL" id="AK088774">
    <property type="protein sequence ID" value="BAC40564.1"/>
    <property type="molecule type" value="mRNA"/>
</dbReference>
<dbReference type="EMBL" id="AK145227">
    <property type="protein sequence ID" value="BAE26311.1"/>
    <property type="status" value="ALT_INIT"/>
    <property type="molecule type" value="mRNA"/>
</dbReference>
<dbReference type="CCDS" id="CCDS29866.1">
    <molecule id="Q9EQQ9-1"/>
</dbReference>
<dbReference type="RefSeq" id="NP_001390278.1">
    <molecule id="Q9EQQ9-3"/>
    <property type="nucleotide sequence ID" value="NM_001403349.1"/>
</dbReference>
<dbReference type="RefSeq" id="NP_076288.1">
    <molecule id="Q9EQQ9-1"/>
    <property type="nucleotide sequence ID" value="NM_023799.5"/>
</dbReference>
<dbReference type="SMR" id="Q9EQQ9"/>
<dbReference type="BioGRID" id="217934">
    <property type="interactions" value="14"/>
</dbReference>
<dbReference type="FunCoup" id="Q9EQQ9">
    <property type="interactions" value="5491"/>
</dbReference>
<dbReference type="IntAct" id="Q9EQQ9">
    <property type="interactions" value="3"/>
</dbReference>
<dbReference type="MINT" id="Q9EQQ9"/>
<dbReference type="STRING" id="10090.ENSMUSP00000026243"/>
<dbReference type="ChEMBL" id="CHEMBL4523449"/>
<dbReference type="CAZy" id="GH84">
    <property type="family name" value="Glycoside Hydrolase Family 84"/>
</dbReference>
<dbReference type="MoonProt" id="Q9EQQ9"/>
<dbReference type="GlyGen" id="Q9EQQ9">
    <property type="glycosylation" value="1 site, 1 N-linked glycan (1 site)"/>
</dbReference>
<dbReference type="iPTMnet" id="Q9EQQ9"/>
<dbReference type="PhosphoSitePlus" id="Q9EQQ9"/>
<dbReference type="SwissPalm" id="Q9EQQ9"/>
<dbReference type="jPOST" id="Q9EQQ9"/>
<dbReference type="PaxDb" id="10090-ENSMUSP00000026243"/>
<dbReference type="PeptideAtlas" id="Q9EQQ9"/>
<dbReference type="ProteomicsDB" id="294070">
    <molecule id="Q9EQQ9-1"/>
</dbReference>
<dbReference type="ProteomicsDB" id="294071">
    <molecule id="Q9EQQ9-2"/>
</dbReference>
<dbReference type="ProteomicsDB" id="294072">
    <molecule id="Q9EQQ9-3"/>
</dbReference>
<dbReference type="Pumba" id="Q9EQQ9"/>
<dbReference type="Antibodypedia" id="31340">
    <property type="antibodies" value="193 antibodies from 28 providers"/>
</dbReference>
<dbReference type="Ensembl" id="ENSMUST00000026243.5">
    <molecule id="Q9EQQ9-1"/>
    <property type="protein sequence ID" value="ENSMUSP00000026243.4"/>
    <property type="gene ID" value="ENSMUSG00000025220.9"/>
</dbReference>
<dbReference type="GeneID" id="76055"/>
<dbReference type="KEGG" id="mmu:76055"/>
<dbReference type="UCSC" id="uc008hrm.1">
    <molecule id="Q9EQQ9-2"/>
    <property type="organism name" value="mouse"/>
</dbReference>
<dbReference type="UCSC" id="uc008hrn.1">
    <molecule id="Q9EQQ9-1"/>
    <property type="organism name" value="mouse"/>
</dbReference>
<dbReference type="AGR" id="MGI:1932139"/>
<dbReference type="CTD" id="10724"/>
<dbReference type="MGI" id="MGI:1932139">
    <property type="gene designation" value="Oga"/>
</dbReference>
<dbReference type="VEuPathDB" id="HostDB:ENSMUSG00000025220"/>
<dbReference type="eggNOG" id="KOG3698">
    <property type="taxonomic scope" value="Eukaryota"/>
</dbReference>
<dbReference type="GeneTree" id="ENSGT00390000007726"/>
<dbReference type="HOGENOM" id="CLU_009837_1_0_1"/>
<dbReference type="InParanoid" id="Q9EQQ9"/>
<dbReference type="OMA" id="ICTRTYL"/>
<dbReference type="OrthoDB" id="9975416at2759"/>
<dbReference type="PhylomeDB" id="Q9EQQ9"/>
<dbReference type="TreeFam" id="TF313732"/>
<dbReference type="BRENDA" id="2.3.1.48">
    <property type="organism ID" value="3474"/>
</dbReference>
<dbReference type="BRENDA" id="3.2.1.169">
    <property type="organism ID" value="3474"/>
</dbReference>
<dbReference type="BioGRID-ORCS" id="76055">
    <property type="hits" value="13 hits in 81 CRISPR screens"/>
</dbReference>
<dbReference type="ChiTaRS" id="Mgea5">
    <property type="organism name" value="mouse"/>
</dbReference>
<dbReference type="PRO" id="PR:Q9EQQ9"/>
<dbReference type="Proteomes" id="UP000000589">
    <property type="component" value="Chromosome 19"/>
</dbReference>
<dbReference type="RNAct" id="Q9EQQ9">
    <property type="molecule type" value="protein"/>
</dbReference>
<dbReference type="Bgee" id="ENSMUSG00000025220">
    <property type="expression patterns" value="Expressed in saccule of membranous labyrinth and 261 other cell types or tissues"/>
</dbReference>
<dbReference type="ExpressionAtlas" id="Q9EQQ9">
    <property type="expression patterns" value="baseline and differential"/>
</dbReference>
<dbReference type="GO" id="GO:0005829">
    <property type="term" value="C:cytosol"/>
    <property type="evidence" value="ECO:0007669"/>
    <property type="project" value="Ensembl"/>
</dbReference>
<dbReference type="GO" id="GO:0005634">
    <property type="term" value="C:nucleus"/>
    <property type="evidence" value="ECO:0007669"/>
    <property type="project" value="UniProtKB-SubCell"/>
</dbReference>
<dbReference type="GO" id="GO:0102571">
    <property type="term" value="F:[protein]-3-O-(N-acetyl-D-glucosaminyl)-L-serine/L-threonine O-N-acetyl-alpha-D-glucosaminase activity"/>
    <property type="evidence" value="ECO:0007669"/>
    <property type="project" value="UniProtKB-EC"/>
</dbReference>
<dbReference type="GO" id="GO:0015929">
    <property type="term" value="F:hexosaminidase activity"/>
    <property type="evidence" value="ECO:0007669"/>
    <property type="project" value="UniProtKB-ARBA"/>
</dbReference>
<dbReference type="GO" id="GO:0042802">
    <property type="term" value="F:identical protein binding"/>
    <property type="evidence" value="ECO:0007669"/>
    <property type="project" value="Ensembl"/>
</dbReference>
<dbReference type="GO" id="GO:0006044">
    <property type="term" value="P:N-acetylglucosamine metabolic process"/>
    <property type="evidence" value="ECO:0007669"/>
    <property type="project" value="Ensembl"/>
</dbReference>
<dbReference type="FunFam" id="3.20.20.80:FF:000009">
    <property type="entry name" value="O-GlcNAcase BT_4395"/>
    <property type="match status" value="1"/>
</dbReference>
<dbReference type="FunFam" id="1.20.58.240:FF:000001">
    <property type="entry name" value="O-GlcNAcase like"/>
    <property type="match status" value="1"/>
</dbReference>
<dbReference type="FunFam" id="3.40.630.30:FF:000023">
    <property type="entry name" value="protein O-GlcNAcase"/>
    <property type="match status" value="1"/>
</dbReference>
<dbReference type="Gene3D" id="3.40.630.30">
    <property type="match status" value="1"/>
</dbReference>
<dbReference type="Gene3D" id="3.20.20.80">
    <property type="entry name" value="Glycosidases"/>
    <property type="match status" value="1"/>
</dbReference>
<dbReference type="Gene3D" id="1.20.58.240">
    <property type="entry name" value="STAT, domain 1"/>
    <property type="match status" value="1"/>
</dbReference>
<dbReference type="InterPro" id="IPR016181">
    <property type="entry name" value="Acyl_CoA_acyltransferase"/>
</dbReference>
<dbReference type="InterPro" id="IPR017853">
    <property type="entry name" value="Glycoside_hydrolase_SF"/>
</dbReference>
<dbReference type="InterPro" id="IPR051822">
    <property type="entry name" value="Glycosyl_Hydrolase_84"/>
</dbReference>
<dbReference type="InterPro" id="IPR011496">
    <property type="entry name" value="O-GlcNAcase_cat"/>
</dbReference>
<dbReference type="PANTHER" id="PTHR13170">
    <property type="entry name" value="O-GLCNACASE"/>
    <property type="match status" value="1"/>
</dbReference>
<dbReference type="PANTHER" id="PTHR13170:SF16">
    <property type="entry name" value="PROTEIN O-GLCNACASE"/>
    <property type="match status" value="1"/>
</dbReference>
<dbReference type="Pfam" id="PF07555">
    <property type="entry name" value="NAGidase"/>
    <property type="match status" value="1"/>
</dbReference>
<dbReference type="SUPFAM" id="SSF51445">
    <property type="entry name" value="(Trans)glycosidases"/>
    <property type="match status" value="1"/>
</dbReference>
<dbReference type="SUPFAM" id="SSF55729">
    <property type="entry name" value="Acyl-CoA N-acyltransferases (Nat)"/>
    <property type="match status" value="1"/>
</dbReference>
<dbReference type="PROSITE" id="PS52009">
    <property type="entry name" value="GH84"/>
    <property type="match status" value="1"/>
</dbReference>
<keyword id="KW-0025">Alternative splicing</keyword>
<keyword id="KW-0963">Cytoplasm</keyword>
<keyword id="KW-0903">Direct protein sequencing</keyword>
<keyword id="KW-0326">Glycosidase</keyword>
<keyword id="KW-0378">Hydrolase</keyword>
<keyword id="KW-0539">Nucleus</keyword>
<keyword id="KW-0597">Phosphoprotein</keyword>
<keyword id="KW-1185">Reference proteome</keyword>
<organism>
    <name type="scientific">Mus musculus</name>
    <name type="common">Mouse</name>
    <dbReference type="NCBI Taxonomy" id="10090"/>
    <lineage>
        <taxon>Eukaryota</taxon>
        <taxon>Metazoa</taxon>
        <taxon>Chordata</taxon>
        <taxon>Craniata</taxon>
        <taxon>Vertebrata</taxon>
        <taxon>Euteleostomi</taxon>
        <taxon>Mammalia</taxon>
        <taxon>Eutheria</taxon>
        <taxon>Euarchontoglires</taxon>
        <taxon>Glires</taxon>
        <taxon>Rodentia</taxon>
        <taxon>Myomorpha</taxon>
        <taxon>Muroidea</taxon>
        <taxon>Muridae</taxon>
        <taxon>Murinae</taxon>
        <taxon>Mus</taxon>
        <taxon>Mus</taxon>
    </lineage>
</organism>
<evidence type="ECO:0000250" key="1">
    <source>
        <dbReference type="UniProtKB" id="O60502"/>
    </source>
</evidence>
<evidence type="ECO:0000250" key="2">
    <source>
        <dbReference type="UniProtKB" id="Q0TR53"/>
    </source>
</evidence>
<evidence type="ECO:0000250" key="3">
    <source>
        <dbReference type="UniProtKB" id="Q8VIJ5"/>
    </source>
</evidence>
<evidence type="ECO:0000255" key="4">
    <source>
        <dbReference type="PROSITE-ProRule" id="PRU01353"/>
    </source>
</evidence>
<evidence type="ECO:0000256" key="5">
    <source>
        <dbReference type="SAM" id="MobiDB-lite"/>
    </source>
</evidence>
<evidence type="ECO:0000269" key="6">
    <source>
    </source>
</evidence>
<evidence type="ECO:0000269" key="7">
    <source>
    </source>
</evidence>
<evidence type="ECO:0000269" key="8">
    <source>
    </source>
</evidence>
<evidence type="ECO:0000269" key="9">
    <source>
    </source>
</evidence>
<evidence type="ECO:0000303" key="10">
    <source>
    </source>
</evidence>
<evidence type="ECO:0000303" key="11">
    <source>
    </source>
</evidence>
<evidence type="ECO:0000303" key="12">
    <source>
    </source>
</evidence>
<evidence type="ECO:0000303" key="13">
    <source>
    </source>
</evidence>
<evidence type="ECO:0000305" key="14"/>
<evidence type="ECO:0000305" key="15">
    <source>
    </source>
</evidence>
<evidence type="ECO:0007744" key="16">
    <source>
    </source>
</evidence>
<evidence type="ECO:0007744" key="17">
    <source>
    </source>
</evidence>
<name>OGA_MOUSE</name>
<sequence length="916" mass="103162">MVQKESQAALEERESERNANPAAASGASLEQSVAPAPGEDNPSGAGAAAVVGAAGGARRFLCGVVEGFYGRPWVMEQRKELFRRLQKWELNTYLYAPKDDYKHRMFWREMYSVEEAEQLMTLISAAREYEIEFIYAISPGLDITFSNPKEVSTLKRKLDQVSQFGCRSFALLFDDIDHNMCAADKEVFSSFAHAQVSITNEIYQYLGEPETFLFCPTEYCGTFCYPNVSQSPYLRTVGEKLLPGIEVLWTGPKVVSKEIPVESIEEVSKIIKRAPVIWDNIHANDYDQKRLFLGPYKGRSTELIPRLKGVLTNPNCEFEANYVAIHTLATWYKSNMNGVRKDVVMTDSEDSTVSIQIKLENEGSDEDIETDVLYSPQMALKLALTEWLQEFGVPHQYSSRQVAHSGAKTSVVDGTPLVAAPSLNATTVVTTVYQEPIMSQGAALSGEPSVLTKEEEKKQPDEEPMDMVVEKQEEAEHKNDNQILTEIVEAKMAEELRPMDTDKESMAESKSPEMSMQEDCIPDVAPMQTDEQTQKEQFVPGPNEKPLYTAEPVTLEDLQLLADLFYLPYEHGPKGAQMLREFQWLRANSSVVSVNCKGKDSEKIEEWRSRAAKFEEMCALVMGMFTRLSNCANRTILYDMYSYVWDIKSIMSMVKSFVQWLGCRSHSSAQFLIGDQEPWAFRGGLAGEFQRLLPIDGANDLFFQPPPLTPTSKVYTIRPYFPKDEASVYKICREMYDDGVGFPFQSQPDLIGDKLVGGLLSLSLDYCFVLEDEDGICGYALGTVDVTPFIKKCKISWIPFMQEKYTKPNGDKELSEAEKIMLSFHEEQEVLPETFLANFPSLIKMDIHKKVTDPSVAKSMMACLLSSLKANGSRGAFCEVRPDDKRILEFYSKLGCFEIAKMEGFPKDVVILGRSL</sequence>
<accession>Q9EQQ9</accession>
<accession>Q3ULY7</accession>
<accession>Q6ZQ71</accession>
<accession>Q8BK05</accession>
<accession>Q8BTT2</accession>
<accession>Q8CFX2</accession>
<accession>Q9CSJ4</accession>
<accession>Q9CUR7</accession>
<protein>
    <recommendedName>
        <fullName evidence="13 14">Protein O-GlcNAcase</fullName>
        <shortName>OGA</shortName>
        <ecNumber evidence="7">3.2.1.169</ecNumber>
    </recommendedName>
    <alternativeName>
        <fullName>Beta-N-acetylhexosaminidase</fullName>
    </alternativeName>
    <alternativeName>
        <fullName>Beta-hexosaminidase</fullName>
    </alternativeName>
    <alternativeName>
        <fullName evidence="12 13">Bifunctional protein NCOAT</fullName>
    </alternativeName>
    <alternativeName>
        <fullName evidence="10">Meningioma-expressed antigen 5</fullName>
    </alternativeName>
    <alternativeName>
        <fullName>N-acetyl-beta-D-glucosaminidase</fullName>
    </alternativeName>
    <alternativeName>
        <fullName>N-acetyl-beta-glucosaminidase</fullName>
    </alternativeName>
</protein>